<organism>
    <name type="scientific">Bacillus anthracis (strain A0248)</name>
    <dbReference type="NCBI Taxonomy" id="592021"/>
    <lineage>
        <taxon>Bacteria</taxon>
        <taxon>Bacillati</taxon>
        <taxon>Bacillota</taxon>
        <taxon>Bacilli</taxon>
        <taxon>Bacillales</taxon>
        <taxon>Bacillaceae</taxon>
        <taxon>Bacillus</taxon>
        <taxon>Bacillus cereus group</taxon>
    </lineage>
</organism>
<dbReference type="EMBL" id="CP001598">
    <property type="protein sequence ID" value="ACQ50702.1"/>
    <property type="molecule type" value="Genomic_DNA"/>
</dbReference>
<dbReference type="RefSeq" id="WP_000331490.1">
    <property type="nucleotide sequence ID" value="NC_012659.1"/>
</dbReference>
<dbReference type="SMR" id="C3P9T3"/>
<dbReference type="GeneID" id="93010915"/>
<dbReference type="KEGG" id="bai:BAA_0154"/>
<dbReference type="HOGENOM" id="CLU_074407_2_2_9"/>
<dbReference type="GO" id="GO:0022625">
    <property type="term" value="C:cytosolic large ribosomal subunit"/>
    <property type="evidence" value="ECO:0007669"/>
    <property type="project" value="TreeGrafter"/>
</dbReference>
<dbReference type="GO" id="GO:0003735">
    <property type="term" value="F:structural constituent of ribosome"/>
    <property type="evidence" value="ECO:0007669"/>
    <property type="project" value="InterPro"/>
</dbReference>
<dbReference type="GO" id="GO:0006412">
    <property type="term" value="P:translation"/>
    <property type="evidence" value="ECO:0007669"/>
    <property type="project" value="UniProtKB-UniRule"/>
</dbReference>
<dbReference type="FunFam" id="3.90.1030.10:FF:000002">
    <property type="entry name" value="50S ribosomal protein L17"/>
    <property type="match status" value="1"/>
</dbReference>
<dbReference type="Gene3D" id="3.90.1030.10">
    <property type="entry name" value="Ribosomal protein L17"/>
    <property type="match status" value="1"/>
</dbReference>
<dbReference type="HAMAP" id="MF_01368">
    <property type="entry name" value="Ribosomal_bL17"/>
    <property type="match status" value="1"/>
</dbReference>
<dbReference type="InterPro" id="IPR000456">
    <property type="entry name" value="Ribosomal_bL17"/>
</dbReference>
<dbReference type="InterPro" id="IPR047859">
    <property type="entry name" value="Ribosomal_bL17_CS"/>
</dbReference>
<dbReference type="InterPro" id="IPR036373">
    <property type="entry name" value="Ribosomal_bL17_sf"/>
</dbReference>
<dbReference type="NCBIfam" id="TIGR00059">
    <property type="entry name" value="L17"/>
    <property type="match status" value="1"/>
</dbReference>
<dbReference type="PANTHER" id="PTHR14413:SF16">
    <property type="entry name" value="LARGE RIBOSOMAL SUBUNIT PROTEIN BL17M"/>
    <property type="match status" value="1"/>
</dbReference>
<dbReference type="PANTHER" id="PTHR14413">
    <property type="entry name" value="RIBOSOMAL PROTEIN L17"/>
    <property type="match status" value="1"/>
</dbReference>
<dbReference type="Pfam" id="PF01196">
    <property type="entry name" value="Ribosomal_L17"/>
    <property type="match status" value="1"/>
</dbReference>
<dbReference type="SUPFAM" id="SSF64263">
    <property type="entry name" value="Prokaryotic ribosomal protein L17"/>
    <property type="match status" value="1"/>
</dbReference>
<dbReference type="PROSITE" id="PS01167">
    <property type="entry name" value="RIBOSOMAL_L17"/>
    <property type="match status" value="1"/>
</dbReference>
<comment type="subunit">
    <text evidence="1">Part of the 50S ribosomal subunit. Contacts protein L32.</text>
</comment>
<comment type="similarity">
    <text evidence="1">Belongs to the bacterial ribosomal protein bL17 family.</text>
</comment>
<proteinExistence type="inferred from homology"/>
<gene>
    <name evidence="1" type="primary">rplQ</name>
    <name type="ordered locus">BAA_0154</name>
</gene>
<reference key="1">
    <citation type="submission" date="2009-04" db="EMBL/GenBank/DDBJ databases">
        <title>Genome sequence of Bacillus anthracis A0248.</title>
        <authorList>
            <person name="Dodson R.J."/>
            <person name="Munk A.C."/>
            <person name="Bruce D."/>
            <person name="Detter C."/>
            <person name="Tapia R."/>
            <person name="Sutton G."/>
            <person name="Sims D."/>
            <person name="Brettin T."/>
        </authorList>
    </citation>
    <scope>NUCLEOTIDE SEQUENCE [LARGE SCALE GENOMIC DNA]</scope>
    <source>
        <strain>A0248</strain>
    </source>
</reference>
<protein>
    <recommendedName>
        <fullName evidence="1">Large ribosomal subunit protein bL17</fullName>
    </recommendedName>
    <alternativeName>
        <fullName evidence="2">50S ribosomal protein L17</fullName>
    </alternativeName>
</protein>
<name>RL17_BACAA</name>
<feature type="chain" id="PRO_1000183996" description="Large ribosomal subunit protein bL17">
    <location>
        <begin position="1"/>
        <end position="120"/>
    </location>
</feature>
<accession>C3P9T3</accession>
<keyword id="KW-0687">Ribonucleoprotein</keyword>
<keyword id="KW-0689">Ribosomal protein</keyword>
<evidence type="ECO:0000255" key="1">
    <source>
        <dbReference type="HAMAP-Rule" id="MF_01368"/>
    </source>
</evidence>
<evidence type="ECO:0000305" key="2"/>
<sequence>MAYRKLGRTSAQRKAMLRDLATDLIINERIQTTETRAKELRSVVEKMITLGKRGDLHARRQAAAFIRNEVANAETGQDALQKLFADVAPRYAERQGGYTRIAKIGPRRGDAAPMVIIELV</sequence>